<organismHost>
    <name type="scientific">Noctuidae</name>
    <name type="common">owlet moths</name>
    <dbReference type="NCBI Taxonomy" id="7100"/>
</organismHost>
<feature type="chain" id="PRO_0000329072" description="DNA polymerase">
    <location>
        <begin position="1"/>
        <end position="1025"/>
    </location>
</feature>
<sequence>MNKEHLTIYAYDWRVNSVEREIYHTSDRKSKDFELHLRVYGVNERGETTCVLMNKVTTSILLEFPDNYDVETNWSRVRMELMSAIFCSTDKTDKNVVMVKKQPLYGARHDKYFCKVSFSSDIGKRAFVMRVNGTVDRGSAATANRKGGKIHQPMKFPNGLTGDMIKIHGIDVPTELQVLEELDIPPCGWIETHNAYKCATITKRFTHQYRANVKTFKYCTRMECIPPVLKTMAWDIEARIHDISSPGLHIDDEIYMMSVSVSDGKDYLLTLGPVSNEDKIRFDEDTDIKVYQTEERLLLGFSELCRKLSVVARMGWNSSRFDCKVLLARANRLNCINSVLDLGMNPPGKISTNSGRTFGPIGDYEPIYIDTEGVVCLDVMEMFKSTYTKLPKFSLQYVSEVFLNEMAIITRTPLDMVHHQKQQRRVYNLMYSECLRQNIAFQDNMFNSKKVVTNDDVVGYSGAYVKDPVPGIHRRVGSLDVNSMYPTLIIAYNLCYTTVINYDDETPYKDEDFEVIEWEDHIGCEHNPIVVEFESLKKILYPKLQQNNTPSKRSPKGDGVVSNFFLPRNNKRCITNENDDVDEDEDQDILNMVTRTKQPSIEEQRATIRYKLLKARISAMSGKRVCETQRLKVLKSSVRPGILPNVVNKLLVERKRIRNIASVPGDPVEKALLDKRQLAYKITANSIYGATGASNGKLPCKNVAKAITALGRKVIKESIQMASDKGIPVIYGDTDSMYVQLSDDLEDPWHYLQSLGDEITSNLRKPMRIESEDNISDVLFLGKKSYICRKLLKDGGISEKLDYHGGIAVRRDHSGFVKSTHNKVVHAIFADVSLQNVKHVIFEECLKLMRRKIPIDELTKTSEVKSIGDGFTLKPSMKNTTTLNSWKLGDYTVKKHPQHDTLSKEYLKRYYLEQLPAHVQLEHKLMERGRSAVEGGRVEYLMVKRPGSKKSSASNIEEITYFKENSSIIQINELHYILQLVKPITKVCEAVWERSDIVVDAIKPICAYSKVLDEMNTKLYTPLVL</sequence>
<dbReference type="EC" id="2.7.7.7"/>
<dbReference type="EMBL" id="DQ517337">
    <property type="protein sequence ID" value="AAY43137.2"/>
    <property type="molecule type" value="Genomic_DNA"/>
</dbReference>
<dbReference type="RefSeq" id="YP_803224.1">
    <property type="nucleotide sequence ID" value="NC_008518.1"/>
</dbReference>
<dbReference type="SMR" id="Q4U3V0"/>
<dbReference type="KEGG" id="vg:5141757"/>
<dbReference type="Proteomes" id="UP000001323">
    <property type="component" value="Genome"/>
</dbReference>
<dbReference type="GO" id="GO:0003677">
    <property type="term" value="F:DNA binding"/>
    <property type="evidence" value="ECO:0007669"/>
    <property type="project" value="UniProtKB-KW"/>
</dbReference>
<dbReference type="GO" id="GO:0003887">
    <property type="term" value="F:DNA-directed DNA polymerase activity"/>
    <property type="evidence" value="ECO:0007669"/>
    <property type="project" value="UniProtKB-KW"/>
</dbReference>
<dbReference type="GO" id="GO:0000166">
    <property type="term" value="F:nucleotide binding"/>
    <property type="evidence" value="ECO:0007669"/>
    <property type="project" value="InterPro"/>
</dbReference>
<dbReference type="GO" id="GO:0006260">
    <property type="term" value="P:DNA replication"/>
    <property type="evidence" value="ECO:0007669"/>
    <property type="project" value="UniProtKB-KW"/>
</dbReference>
<dbReference type="GO" id="GO:0039693">
    <property type="term" value="P:viral DNA genome replication"/>
    <property type="evidence" value="ECO:0007669"/>
    <property type="project" value="UniProtKB-KW"/>
</dbReference>
<dbReference type="Gene3D" id="1.10.132.60">
    <property type="entry name" value="DNA polymerase family B, C-terminal domain"/>
    <property type="match status" value="1"/>
</dbReference>
<dbReference type="Gene3D" id="1.10.287.690">
    <property type="entry name" value="Helix hairpin bin"/>
    <property type="match status" value="1"/>
</dbReference>
<dbReference type="Gene3D" id="3.90.1600.10">
    <property type="entry name" value="Palm domain of DNA polymerase"/>
    <property type="match status" value="1"/>
</dbReference>
<dbReference type="Gene3D" id="3.30.420.10">
    <property type="entry name" value="Ribonuclease H-like superfamily/Ribonuclease H"/>
    <property type="match status" value="1"/>
</dbReference>
<dbReference type="InterPro" id="IPR006172">
    <property type="entry name" value="DNA-dir_DNA_pol_B"/>
</dbReference>
<dbReference type="InterPro" id="IPR017964">
    <property type="entry name" value="DNA-dir_DNA_pol_B_CS"/>
</dbReference>
<dbReference type="InterPro" id="IPR006133">
    <property type="entry name" value="DNA-dir_DNA_pol_B_exonuc"/>
</dbReference>
<dbReference type="InterPro" id="IPR006134">
    <property type="entry name" value="DNA-dir_DNA_pol_B_multi_dom"/>
</dbReference>
<dbReference type="InterPro" id="IPR043502">
    <property type="entry name" value="DNA/RNA_pol_sf"/>
</dbReference>
<dbReference type="InterPro" id="IPR042087">
    <property type="entry name" value="DNA_pol_B_thumb"/>
</dbReference>
<dbReference type="InterPro" id="IPR023211">
    <property type="entry name" value="DNA_pol_palm_dom_sf"/>
</dbReference>
<dbReference type="InterPro" id="IPR050240">
    <property type="entry name" value="DNA_pol_type-B"/>
</dbReference>
<dbReference type="InterPro" id="IPR012337">
    <property type="entry name" value="RNaseH-like_sf"/>
</dbReference>
<dbReference type="InterPro" id="IPR036397">
    <property type="entry name" value="RNaseH_sf"/>
</dbReference>
<dbReference type="PANTHER" id="PTHR10322">
    <property type="entry name" value="DNA POLYMERASE CATALYTIC SUBUNIT"/>
    <property type="match status" value="1"/>
</dbReference>
<dbReference type="PANTHER" id="PTHR10322:SF23">
    <property type="entry name" value="DNA POLYMERASE DELTA CATALYTIC SUBUNIT"/>
    <property type="match status" value="1"/>
</dbReference>
<dbReference type="Pfam" id="PF00136">
    <property type="entry name" value="DNA_pol_B"/>
    <property type="match status" value="2"/>
</dbReference>
<dbReference type="Pfam" id="PF03104">
    <property type="entry name" value="DNA_pol_B_exo1"/>
    <property type="match status" value="1"/>
</dbReference>
<dbReference type="PRINTS" id="PR00106">
    <property type="entry name" value="DNAPOLB"/>
</dbReference>
<dbReference type="SMART" id="SM00486">
    <property type="entry name" value="POLBc"/>
    <property type="match status" value="1"/>
</dbReference>
<dbReference type="SUPFAM" id="SSF56672">
    <property type="entry name" value="DNA/RNA polymerases"/>
    <property type="match status" value="1"/>
</dbReference>
<dbReference type="SUPFAM" id="SSF53098">
    <property type="entry name" value="Ribonuclease H-like"/>
    <property type="match status" value="1"/>
</dbReference>
<dbReference type="PROSITE" id="PS00116">
    <property type="entry name" value="DNA_POLYMERASE_B"/>
    <property type="match status" value="1"/>
</dbReference>
<accession>Q4U3V0</accession>
<organism>
    <name type="scientific">Trichoplusia ni ascovirus 2c</name>
    <name type="common">TnAV-2c</name>
    <dbReference type="NCBI Taxonomy" id="328615"/>
    <lineage>
        <taxon>Viruses</taxon>
        <taxon>Varidnaviria</taxon>
        <taxon>Bamfordvirae</taxon>
        <taxon>Nucleocytoviricota</taxon>
        <taxon>Megaviricetes</taxon>
        <taxon>Pimascovirales</taxon>
        <taxon>Ascoviridae</taxon>
        <taxon>Ascovirus</taxon>
    </lineage>
</organism>
<proteinExistence type="inferred from homology"/>
<evidence type="ECO:0000250" key="1"/>
<evidence type="ECO:0000305" key="2"/>
<reference key="1">
    <citation type="journal article" date="2006" name="Virology">
        <title>Sequence and organization of the Trichoplusia ni ascovirus 2c (Ascoviridae) genome.</title>
        <authorList>
            <person name="Wang L."/>
            <person name="Xue J."/>
            <person name="Seaborn C.P."/>
            <person name="Arif B.M."/>
            <person name="Cheng X.W."/>
        </authorList>
    </citation>
    <scope>NUCLEOTIDE SEQUENCE [LARGE SCALE GENOMIC DNA]</scope>
</reference>
<protein>
    <recommendedName>
        <fullName>DNA polymerase</fullName>
        <ecNumber>2.7.7.7</ecNumber>
    </recommendedName>
</protein>
<gene>
    <name type="ORF">ORF1</name>
</gene>
<comment type="function">
    <text evidence="1">Replicates the viral genome. Host DNA polymerases cannot substitute for the viral enzyme in this process (By similarity).</text>
</comment>
<comment type="catalytic activity">
    <reaction>
        <text>DNA(n) + a 2'-deoxyribonucleoside 5'-triphosphate = DNA(n+1) + diphosphate</text>
        <dbReference type="Rhea" id="RHEA:22508"/>
        <dbReference type="Rhea" id="RHEA-COMP:17339"/>
        <dbReference type="Rhea" id="RHEA-COMP:17340"/>
        <dbReference type="ChEBI" id="CHEBI:33019"/>
        <dbReference type="ChEBI" id="CHEBI:61560"/>
        <dbReference type="ChEBI" id="CHEBI:173112"/>
        <dbReference type="EC" id="2.7.7.7"/>
    </reaction>
</comment>
<comment type="similarity">
    <text evidence="2">Belongs to the DNA polymerase type-B family.</text>
</comment>
<keyword id="KW-0235">DNA replication</keyword>
<keyword id="KW-0238">DNA-binding</keyword>
<keyword id="KW-0239">DNA-directed DNA polymerase</keyword>
<keyword id="KW-0548">Nucleotidyltransferase</keyword>
<keyword id="KW-1185">Reference proteome</keyword>
<keyword id="KW-0808">Transferase</keyword>
<keyword id="KW-1194">Viral DNA replication</keyword>
<name>DPOL_TNAVC</name>